<evidence type="ECO:0000255" key="1">
    <source>
        <dbReference type="HAMAP-Rule" id="MF_00184"/>
    </source>
</evidence>
<evidence type="ECO:0000255" key="2">
    <source>
        <dbReference type="PROSITE-ProRule" id="PRU01228"/>
    </source>
</evidence>
<protein>
    <recommendedName>
        <fullName evidence="1">Threonine--tRNA ligase</fullName>
        <ecNumber evidence="1">6.1.1.3</ecNumber>
    </recommendedName>
    <alternativeName>
        <fullName evidence="1">Threonyl-tRNA synthetase</fullName>
        <shortName evidence="1">ThrRS</shortName>
    </alternativeName>
</protein>
<reference key="1">
    <citation type="journal article" date="2007" name="PLoS ONE">
        <title>Analysis of the neurotoxin complex genes in Clostridium botulinum A1-A4 and B1 strains: BoNT/A3, /Ba4 and /B1 clusters are located within plasmids.</title>
        <authorList>
            <person name="Smith T.J."/>
            <person name="Hill K.K."/>
            <person name="Foley B.T."/>
            <person name="Detter J.C."/>
            <person name="Munk A.C."/>
            <person name="Bruce D.C."/>
            <person name="Doggett N.A."/>
            <person name="Smith L.A."/>
            <person name="Marks J.D."/>
            <person name="Xie G."/>
            <person name="Brettin T.S."/>
        </authorList>
    </citation>
    <scope>NUCLEOTIDE SEQUENCE [LARGE SCALE GENOMIC DNA]</scope>
    <source>
        <strain>ATCC 19397 / Type A</strain>
    </source>
</reference>
<sequence>MIKITLKDGKVMEFEEGIKISDIAMKISPALYKKALAAKIDGETVDLMTELHKDSSLEILTFEDEMGKWALRHTGSHMLAQAVKRLYPEVKLAIGPAIDTGFYYDFEADFTFTPEMLEKIEAEIKKIIKENHKLERFELPREEAIKLMKEKNEDYKVELIEDLPEGEVISFYKQGDFTDLCAGPHVPSTGKVKSVKLLSLAGAYWRGDENNKMLQRIYGTAFTKKSELDEYLNMIEEAKKRDHRKLGKELDLFSIHEEGPGFPFFHPKGMIVRNILESFWREEHTKAGYQEIRTPLILNEALWHQSGHWDHYKENMYFTNIDDDDYAIKPMNCPGGILVYKNSMHSYRDLPLRLSELGIVHRHELSGALHGLMRVRCFTQDDAHLYMTKEQIKEEVVGIIKLIDKFYKLFGFEYFVELSTRPEDSMGSDEDWEIATNGLREALDSIGKEYRVNEGDGAFYGPKIDFHLKDCIGRTWQCGTIQLDFQMPERFDLSYIGADGEKHRPVMVHRTIYGSVERFIGILIEQYAGAFPTWLAPVQVKLMNITDSQYDYLKKVEEALKENNIRVEIDTRNEKIGYKIREAQLQKVPYMLILGDKEVEAGKVAVRSRKDGDLGAISLEEFIEKIKNEIKNKTN</sequence>
<dbReference type="EC" id="6.1.1.3" evidence="1"/>
<dbReference type="EMBL" id="CP000726">
    <property type="protein sequence ID" value="ABS34467.1"/>
    <property type="molecule type" value="Genomic_DNA"/>
</dbReference>
<dbReference type="RefSeq" id="WP_012048136.1">
    <property type="nucleotide sequence ID" value="NC_009697.1"/>
</dbReference>
<dbReference type="SMR" id="A7FY87"/>
<dbReference type="GeneID" id="5186859"/>
<dbReference type="KEGG" id="cba:CLB_3168"/>
<dbReference type="HOGENOM" id="CLU_008554_0_1_9"/>
<dbReference type="GO" id="GO:0005737">
    <property type="term" value="C:cytoplasm"/>
    <property type="evidence" value="ECO:0007669"/>
    <property type="project" value="UniProtKB-SubCell"/>
</dbReference>
<dbReference type="GO" id="GO:0005524">
    <property type="term" value="F:ATP binding"/>
    <property type="evidence" value="ECO:0007669"/>
    <property type="project" value="UniProtKB-UniRule"/>
</dbReference>
<dbReference type="GO" id="GO:0140096">
    <property type="term" value="F:catalytic activity, acting on a protein"/>
    <property type="evidence" value="ECO:0007669"/>
    <property type="project" value="UniProtKB-ARBA"/>
</dbReference>
<dbReference type="GO" id="GO:0046872">
    <property type="term" value="F:metal ion binding"/>
    <property type="evidence" value="ECO:0007669"/>
    <property type="project" value="UniProtKB-KW"/>
</dbReference>
<dbReference type="GO" id="GO:0004829">
    <property type="term" value="F:threonine-tRNA ligase activity"/>
    <property type="evidence" value="ECO:0007669"/>
    <property type="project" value="UniProtKB-UniRule"/>
</dbReference>
<dbReference type="GO" id="GO:0016740">
    <property type="term" value="F:transferase activity"/>
    <property type="evidence" value="ECO:0007669"/>
    <property type="project" value="UniProtKB-ARBA"/>
</dbReference>
<dbReference type="GO" id="GO:0000049">
    <property type="term" value="F:tRNA binding"/>
    <property type="evidence" value="ECO:0007669"/>
    <property type="project" value="UniProtKB-KW"/>
</dbReference>
<dbReference type="GO" id="GO:0006435">
    <property type="term" value="P:threonyl-tRNA aminoacylation"/>
    <property type="evidence" value="ECO:0007669"/>
    <property type="project" value="UniProtKB-UniRule"/>
</dbReference>
<dbReference type="CDD" id="cd01667">
    <property type="entry name" value="TGS_ThrRS"/>
    <property type="match status" value="1"/>
</dbReference>
<dbReference type="CDD" id="cd00860">
    <property type="entry name" value="ThrRS_anticodon"/>
    <property type="match status" value="1"/>
</dbReference>
<dbReference type="CDD" id="cd00771">
    <property type="entry name" value="ThrRS_core"/>
    <property type="match status" value="1"/>
</dbReference>
<dbReference type="FunFam" id="3.10.20.30:FF:000005">
    <property type="entry name" value="Threonine--tRNA ligase"/>
    <property type="match status" value="1"/>
</dbReference>
<dbReference type="FunFam" id="3.30.54.20:FF:000002">
    <property type="entry name" value="Threonine--tRNA ligase"/>
    <property type="match status" value="1"/>
</dbReference>
<dbReference type="FunFam" id="3.30.930.10:FF:000002">
    <property type="entry name" value="Threonine--tRNA ligase"/>
    <property type="match status" value="1"/>
</dbReference>
<dbReference type="FunFam" id="3.40.50.800:FF:000001">
    <property type="entry name" value="Threonine--tRNA ligase"/>
    <property type="match status" value="1"/>
</dbReference>
<dbReference type="FunFam" id="3.30.980.10:FF:000005">
    <property type="entry name" value="Threonyl-tRNA synthetase, mitochondrial"/>
    <property type="match status" value="1"/>
</dbReference>
<dbReference type="Gene3D" id="3.10.20.30">
    <property type="match status" value="1"/>
</dbReference>
<dbReference type="Gene3D" id="3.30.54.20">
    <property type="match status" value="1"/>
</dbReference>
<dbReference type="Gene3D" id="3.40.50.800">
    <property type="entry name" value="Anticodon-binding domain"/>
    <property type="match status" value="1"/>
</dbReference>
<dbReference type="Gene3D" id="3.30.930.10">
    <property type="entry name" value="Bira Bifunctional Protein, Domain 2"/>
    <property type="match status" value="1"/>
</dbReference>
<dbReference type="Gene3D" id="3.30.980.10">
    <property type="entry name" value="Threonyl-trna Synthetase, Chain A, domain 2"/>
    <property type="match status" value="1"/>
</dbReference>
<dbReference type="HAMAP" id="MF_00184">
    <property type="entry name" value="Thr_tRNA_synth"/>
    <property type="match status" value="1"/>
</dbReference>
<dbReference type="InterPro" id="IPR002314">
    <property type="entry name" value="aa-tRNA-synt_IIb"/>
</dbReference>
<dbReference type="InterPro" id="IPR006195">
    <property type="entry name" value="aa-tRNA-synth_II"/>
</dbReference>
<dbReference type="InterPro" id="IPR045864">
    <property type="entry name" value="aa-tRNA-synth_II/BPL/LPL"/>
</dbReference>
<dbReference type="InterPro" id="IPR004154">
    <property type="entry name" value="Anticodon-bd"/>
</dbReference>
<dbReference type="InterPro" id="IPR036621">
    <property type="entry name" value="Anticodon-bd_dom_sf"/>
</dbReference>
<dbReference type="InterPro" id="IPR012675">
    <property type="entry name" value="Beta-grasp_dom_sf"/>
</dbReference>
<dbReference type="InterPro" id="IPR004095">
    <property type="entry name" value="TGS"/>
</dbReference>
<dbReference type="InterPro" id="IPR012676">
    <property type="entry name" value="TGS-like"/>
</dbReference>
<dbReference type="InterPro" id="IPR002320">
    <property type="entry name" value="Thr-tRNA-ligase_IIa"/>
</dbReference>
<dbReference type="InterPro" id="IPR018163">
    <property type="entry name" value="Thr/Ala-tRNA-synth_IIc_edit"/>
</dbReference>
<dbReference type="InterPro" id="IPR047246">
    <property type="entry name" value="ThrRS_anticodon"/>
</dbReference>
<dbReference type="InterPro" id="IPR033728">
    <property type="entry name" value="ThrRS_core"/>
</dbReference>
<dbReference type="InterPro" id="IPR012947">
    <property type="entry name" value="tRNA_SAD"/>
</dbReference>
<dbReference type="NCBIfam" id="TIGR00418">
    <property type="entry name" value="thrS"/>
    <property type="match status" value="1"/>
</dbReference>
<dbReference type="PANTHER" id="PTHR11451:SF44">
    <property type="entry name" value="THREONINE--TRNA LIGASE, CHLOROPLASTIC_MITOCHONDRIAL 2"/>
    <property type="match status" value="1"/>
</dbReference>
<dbReference type="PANTHER" id="PTHR11451">
    <property type="entry name" value="THREONINE-TRNA LIGASE"/>
    <property type="match status" value="1"/>
</dbReference>
<dbReference type="Pfam" id="PF03129">
    <property type="entry name" value="HGTP_anticodon"/>
    <property type="match status" value="1"/>
</dbReference>
<dbReference type="Pfam" id="PF02824">
    <property type="entry name" value="TGS"/>
    <property type="match status" value="1"/>
</dbReference>
<dbReference type="Pfam" id="PF00587">
    <property type="entry name" value="tRNA-synt_2b"/>
    <property type="match status" value="1"/>
</dbReference>
<dbReference type="Pfam" id="PF07973">
    <property type="entry name" value="tRNA_SAD"/>
    <property type="match status" value="1"/>
</dbReference>
<dbReference type="PRINTS" id="PR01047">
    <property type="entry name" value="TRNASYNTHTHR"/>
</dbReference>
<dbReference type="SMART" id="SM00863">
    <property type="entry name" value="tRNA_SAD"/>
    <property type="match status" value="1"/>
</dbReference>
<dbReference type="SUPFAM" id="SSF52954">
    <property type="entry name" value="Class II aaRS ABD-related"/>
    <property type="match status" value="1"/>
</dbReference>
<dbReference type="SUPFAM" id="SSF55681">
    <property type="entry name" value="Class II aaRS and biotin synthetases"/>
    <property type="match status" value="1"/>
</dbReference>
<dbReference type="SUPFAM" id="SSF81271">
    <property type="entry name" value="TGS-like"/>
    <property type="match status" value="1"/>
</dbReference>
<dbReference type="SUPFAM" id="SSF55186">
    <property type="entry name" value="ThrRS/AlaRS common domain"/>
    <property type="match status" value="1"/>
</dbReference>
<dbReference type="PROSITE" id="PS50862">
    <property type="entry name" value="AA_TRNA_LIGASE_II"/>
    <property type="match status" value="1"/>
</dbReference>
<dbReference type="PROSITE" id="PS51880">
    <property type="entry name" value="TGS"/>
    <property type="match status" value="1"/>
</dbReference>
<proteinExistence type="inferred from homology"/>
<gene>
    <name evidence="1" type="primary">thrS</name>
    <name type="ordered locus">CLB_3168</name>
</gene>
<name>SYT_CLOB1</name>
<organism>
    <name type="scientific">Clostridium botulinum (strain ATCC 19397 / Type A)</name>
    <dbReference type="NCBI Taxonomy" id="441770"/>
    <lineage>
        <taxon>Bacteria</taxon>
        <taxon>Bacillati</taxon>
        <taxon>Bacillota</taxon>
        <taxon>Clostridia</taxon>
        <taxon>Eubacteriales</taxon>
        <taxon>Clostridiaceae</taxon>
        <taxon>Clostridium</taxon>
    </lineage>
</organism>
<comment type="function">
    <text evidence="1">Catalyzes the attachment of threonine to tRNA(Thr) in a two-step reaction: L-threonine is first activated by ATP to form Thr-AMP and then transferred to the acceptor end of tRNA(Thr). Also edits incorrectly charged L-seryl-tRNA(Thr).</text>
</comment>
<comment type="catalytic activity">
    <reaction evidence="1">
        <text>tRNA(Thr) + L-threonine + ATP = L-threonyl-tRNA(Thr) + AMP + diphosphate + H(+)</text>
        <dbReference type="Rhea" id="RHEA:24624"/>
        <dbReference type="Rhea" id="RHEA-COMP:9670"/>
        <dbReference type="Rhea" id="RHEA-COMP:9704"/>
        <dbReference type="ChEBI" id="CHEBI:15378"/>
        <dbReference type="ChEBI" id="CHEBI:30616"/>
        <dbReference type="ChEBI" id="CHEBI:33019"/>
        <dbReference type="ChEBI" id="CHEBI:57926"/>
        <dbReference type="ChEBI" id="CHEBI:78442"/>
        <dbReference type="ChEBI" id="CHEBI:78534"/>
        <dbReference type="ChEBI" id="CHEBI:456215"/>
        <dbReference type="EC" id="6.1.1.3"/>
    </reaction>
</comment>
<comment type="cofactor">
    <cofactor evidence="1">
        <name>Zn(2+)</name>
        <dbReference type="ChEBI" id="CHEBI:29105"/>
    </cofactor>
    <text evidence="1">Binds 1 zinc ion per subunit.</text>
</comment>
<comment type="subunit">
    <text evidence="1">Homodimer.</text>
</comment>
<comment type="subcellular location">
    <subcellularLocation>
        <location evidence="1">Cytoplasm</location>
    </subcellularLocation>
</comment>
<comment type="similarity">
    <text evidence="1">Belongs to the class-II aminoacyl-tRNA synthetase family.</text>
</comment>
<accession>A7FY87</accession>
<feature type="chain" id="PRO_1000020369" description="Threonine--tRNA ligase">
    <location>
        <begin position="1"/>
        <end position="635"/>
    </location>
</feature>
<feature type="domain" description="TGS" evidence="2">
    <location>
        <begin position="1"/>
        <end position="61"/>
    </location>
</feature>
<feature type="region of interest" description="Catalytic" evidence="1">
    <location>
        <begin position="242"/>
        <end position="532"/>
    </location>
</feature>
<feature type="binding site" evidence="1">
    <location>
        <position position="333"/>
    </location>
    <ligand>
        <name>Zn(2+)</name>
        <dbReference type="ChEBI" id="CHEBI:29105"/>
    </ligand>
</feature>
<feature type="binding site" evidence="1">
    <location>
        <position position="384"/>
    </location>
    <ligand>
        <name>Zn(2+)</name>
        <dbReference type="ChEBI" id="CHEBI:29105"/>
    </ligand>
</feature>
<feature type="binding site" evidence="1">
    <location>
        <position position="509"/>
    </location>
    <ligand>
        <name>Zn(2+)</name>
        <dbReference type="ChEBI" id="CHEBI:29105"/>
    </ligand>
</feature>
<keyword id="KW-0030">Aminoacyl-tRNA synthetase</keyword>
<keyword id="KW-0067">ATP-binding</keyword>
<keyword id="KW-0963">Cytoplasm</keyword>
<keyword id="KW-0436">Ligase</keyword>
<keyword id="KW-0479">Metal-binding</keyword>
<keyword id="KW-0547">Nucleotide-binding</keyword>
<keyword id="KW-0648">Protein biosynthesis</keyword>
<keyword id="KW-0694">RNA-binding</keyword>
<keyword id="KW-0820">tRNA-binding</keyword>
<keyword id="KW-0862">Zinc</keyword>